<organism>
    <name type="scientific">Vibrio parahaemolyticus serotype O3:K6 (strain RIMD 2210633)</name>
    <dbReference type="NCBI Taxonomy" id="223926"/>
    <lineage>
        <taxon>Bacteria</taxon>
        <taxon>Pseudomonadati</taxon>
        <taxon>Pseudomonadota</taxon>
        <taxon>Gammaproteobacteria</taxon>
        <taxon>Vibrionales</taxon>
        <taxon>Vibrionaceae</taxon>
        <taxon>Vibrio</taxon>
    </lineage>
</organism>
<accession>Q87FK5</accession>
<gene>
    <name evidence="1" type="primary">araB</name>
    <name type="ordered locus">VPA1674</name>
</gene>
<proteinExistence type="inferred from homology"/>
<reference key="1">
    <citation type="journal article" date="2003" name="Lancet">
        <title>Genome sequence of Vibrio parahaemolyticus: a pathogenic mechanism distinct from that of V. cholerae.</title>
        <authorList>
            <person name="Makino K."/>
            <person name="Oshima K."/>
            <person name="Kurokawa K."/>
            <person name="Yokoyama K."/>
            <person name="Uda T."/>
            <person name="Tagomori K."/>
            <person name="Iijima Y."/>
            <person name="Najima M."/>
            <person name="Nakano M."/>
            <person name="Yamashita A."/>
            <person name="Kubota Y."/>
            <person name="Kimura S."/>
            <person name="Yasunaga T."/>
            <person name="Honda T."/>
            <person name="Shinagawa H."/>
            <person name="Hattori M."/>
            <person name="Iida T."/>
        </authorList>
    </citation>
    <scope>NUCLEOTIDE SEQUENCE [LARGE SCALE GENOMIC DNA]</scope>
    <source>
        <strain>RIMD 2210633</strain>
    </source>
</reference>
<protein>
    <recommendedName>
        <fullName evidence="1">Ribulokinase</fullName>
        <ecNumber evidence="1">2.7.1.16</ecNumber>
    </recommendedName>
</protein>
<dbReference type="EC" id="2.7.1.16" evidence="1"/>
<dbReference type="EMBL" id="BA000032">
    <property type="protein sequence ID" value="BAC63017.1"/>
    <property type="molecule type" value="Genomic_DNA"/>
</dbReference>
<dbReference type="RefSeq" id="NP_801184.1">
    <property type="nucleotide sequence ID" value="NC_004605.1"/>
</dbReference>
<dbReference type="RefSeq" id="WP_005460432.1">
    <property type="nucleotide sequence ID" value="NC_004605.1"/>
</dbReference>
<dbReference type="SMR" id="Q87FK5"/>
<dbReference type="GeneID" id="1192370"/>
<dbReference type="KEGG" id="vpa:VPA1674"/>
<dbReference type="PATRIC" id="fig|223926.6.peg.4592"/>
<dbReference type="eggNOG" id="COG1069">
    <property type="taxonomic scope" value="Bacteria"/>
</dbReference>
<dbReference type="HOGENOM" id="CLU_009281_9_1_6"/>
<dbReference type="UniPathway" id="UPA00145">
    <property type="reaction ID" value="UER00566"/>
</dbReference>
<dbReference type="Proteomes" id="UP000002493">
    <property type="component" value="Chromosome 2"/>
</dbReference>
<dbReference type="GO" id="GO:0005737">
    <property type="term" value="C:cytoplasm"/>
    <property type="evidence" value="ECO:0007669"/>
    <property type="project" value="TreeGrafter"/>
</dbReference>
<dbReference type="GO" id="GO:0005524">
    <property type="term" value="F:ATP binding"/>
    <property type="evidence" value="ECO:0007669"/>
    <property type="project" value="UniProtKB-KW"/>
</dbReference>
<dbReference type="GO" id="GO:0019150">
    <property type="term" value="F:D-ribulokinase activity"/>
    <property type="evidence" value="ECO:0007669"/>
    <property type="project" value="RHEA"/>
</dbReference>
<dbReference type="GO" id="GO:0008741">
    <property type="term" value="F:ribulokinase activity"/>
    <property type="evidence" value="ECO:0007669"/>
    <property type="project" value="UniProtKB-UniRule"/>
</dbReference>
<dbReference type="GO" id="GO:0019569">
    <property type="term" value="P:L-arabinose catabolic process to xylulose 5-phosphate"/>
    <property type="evidence" value="ECO:0007669"/>
    <property type="project" value="UniProtKB-UniRule"/>
</dbReference>
<dbReference type="CDD" id="cd07781">
    <property type="entry name" value="ASKHA_NBD_FGGY_L-RBK"/>
    <property type="match status" value="1"/>
</dbReference>
<dbReference type="Gene3D" id="1.20.58.2240">
    <property type="match status" value="1"/>
</dbReference>
<dbReference type="Gene3D" id="3.30.420.40">
    <property type="match status" value="1"/>
</dbReference>
<dbReference type="HAMAP" id="MF_00520">
    <property type="entry name" value="Ribulokinase"/>
    <property type="match status" value="1"/>
</dbReference>
<dbReference type="InterPro" id="IPR043129">
    <property type="entry name" value="ATPase_NBD"/>
</dbReference>
<dbReference type="InterPro" id="IPR000577">
    <property type="entry name" value="Carb_kinase_FGGY"/>
</dbReference>
<dbReference type="InterPro" id="IPR018485">
    <property type="entry name" value="FGGY_C"/>
</dbReference>
<dbReference type="InterPro" id="IPR018484">
    <property type="entry name" value="FGGY_N"/>
</dbReference>
<dbReference type="InterPro" id="IPR005929">
    <property type="entry name" value="Ribulokinase"/>
</dbReference>
<dbReference type="NCBIfam" id="TIGR01234">
    <property type="entry name" value="L-ribulokinase"/>
    <property type="match status" value="1"/>
</dbReference>
<dbReference type="NCBIfam" id="NF003154">
    <property type="entry name" value="PRK04123.1"/>
    <property type="match status" value="1"/>
</dbReference>
<dbReference type="PANTHER" id="PTHR43435:SF4">
    <property type="entry name" value="FGGY CARBOHYDRATE KINASE DOMAIN-CONTAINING PROTEIN"/>
    <property type="match status" value="1"/>
</dbReference>
<dbReference type="PANTHER" id="PTHR43435">
    <property type="entry name" value="RIBULOKINASE"/>
    <property type="match status" value="1"/>
</dbReference>
<dbReference type="Pfam" id="PF02782">
    <property type="entry name" value="FGGY_C"/>
    <property type="match status" value="1"/>
</dbReference>
<dbReference type="Pfam" id="PF00370">
    <property type="entry name" value="FGGY_N"/>
    <property type="match status" value="1"/>
</dbReference>
<dbReference type="PIRSF" id="PIRSF000538">
    <property type="entry name" value="GlpK"/>
    <property type="match status" value="1"/>
</dbReference>
<dbReference type="SUPFAM" id="SSF53067">
    <property type="entry name" value="Actin-like ATPase domain"/>
    <property type="match status" value="2"/>
</dbReference>
<sequence>MDTINTHQQHVIGLDFGSDSVRALIVNAETGQEVSSSVVYYSRWMKGLYCQPAQSQFRHHPQDYLDAMTSAIQEVLATVPQTLADSVVGIGVDTTGSTPAPIDENGTVLALLPEFEHNPNAMFVLWKDHTSVAKADRINELAHSGKFTDYTRYVGGVYSSEWFWAKAAWVSEQDEQVAKRAFSWVELCDWIPAILADTQHPQKLRRGICAAGHKAMWHESWGGLPEQAFLSAISPTLDGIRDRMFTEVFTSDQAAGYLSKAWAIKLGLPEGIAIAIGEFDCHMGAVGAGAGANDLVKVIGTSTCDILMVESQNVGDRTIHGICGQVEGSAMPELLALEAGQSAFGDMYAWFKNVLMWPLQAYAEHNPDFALTAEEIASELLPMLSQAAEQQGIDQYTPVAMDWLNGRRTPYANQRLKGAICDLNLGSSSPAIFSALVESTAHGAKAIVDCFIEQDVTVERVIAIGGIAQKSPYVMQMCADVIGRDIIVVESDQCCALGAAIFAAVAAGVYPTTKSAQAVMASPVRQTYSPTPKVQTLRAQRYATYRELGQHMEQIAEFHQSQEREDV</sequence>
<feature type="chain" id="PRO_0000198376" description="Ribulokinase">
    <location>
        <begin position="1"/>
        <end position="567"/>
    </location>
</feature>
<comment type="catalytic activity">
    <reaction evidence="1">
        <text>D-ribulose + ATP = D-ribulose 5-phosphate + ADP + H(+)</text>
        <dbReference type="Rhea" id="RHEA:17601"/>
        <dbReference type="ChEBI" id="CHEBI:15378"/>
        <dbReference type="ChEBI" id="CHEBI:17173"/>
        <dbReference type="ChEBI" id="CHEBI:30616"/>
        <dbReference type="ChEBI" id="CHEBI:58121"/>
        <dbReference type="ChEBI" id="CHEBI:456216"/>
        <dbReference type="EC" id="2.7.1.16"/>
    </reaction>
</comment>
<comment type="catalytic activity">
    <reaction evidence="1">
        <text>L-ribulose + ATP = L-ribulose 5-phosphate + ADP + H(+)</text>
        <dbReference type="Rhea" id="RHEA:22072"/>
        <dbReference type="ChEBI" id="CHEBI:15378"/>
        <dbReference type="ChEBI" id="CHEBI:16880"/>
        <dbReference type="ChEBI" id="CHEBI:30616"/>
        <dbReference type="ChEBI" id="CHEBI:58226"/>
        <dbReference type="ChEBI" id="CHEBI:456216"/>
        <dbReference type="EC" id="2.7.1.16"/>
    </reaction>
</comment>
<comment type="pathway">
    <text evidence="1">Carbohydrate degradation; L-arabinose degradation via L-ribulose; D-xylulose 5-phosphate from L-arabinose (bacterial route): step 2/3.</text>
</comment>
<comment type="similarity">
    <text evidence="1">Belongs to the ribulokinase family.</text>
</comment>
<name>ARAB_VIBPA</name>
<keyword id="KW-0054">Arabinose catabolism</keyword>
<keyword id="KW-0067">ATP-binding</keyword>
<keyword id="KW-0119">Carbohydrate metabolism</keyword>
<keyword id="KW-0418">Kinase</keyword>
<keyword id="KW-0547">Nucleotide-binding</keyword>
<keyword id="KW-0808">Transferase</keyword>
<evidence type="ECO:0000255" key="1">
    <source>
        <dbReference type="HAMAP-Rule" id="MF_00520"/>
    </source>
</evidence>